<gene>
    <name type="primary">ZNF22</name>
    <name type="synonym">KOX15</name>
    <name type="synonym">KROX26</name>
</gene>
<proteinExistence type="evidence at protein level"/>
<accession>P17026</accession>
<accession>Q5T741</accession>
<accession>Q96FM4</accession>
<feature type="chain" id="PRO_0000047348" description="Zinc finger protein 22">
    <location>
        <begin position="1"/>
        <end position="224"/>
    </location>
</feature>
<feature type="zinc finger region" description="C2H2-type 1" evidence="3">
    <location>
        <begin position="55"/>
        <end position="77"/>
    </location>
</feature>
<feature type="zinc finger region" description="C2H2-type 2" evidence="3">
    <location>
        <begin position="83"/>
        <end position="105"/>
    </location>
</feature>
<feature type="zinc finger region" description="C2H2-type 3" evidence="3">
    <location>
        <begin position="111"/>
        <end position="133"/>
    </location>
</feature>
<feature type="zinc finger region" description="C2H2-type 4" evidence="3">
    <location>
        <begin position="139"/>
        <end position="161"/>
    </location>
</feature>
<feature type="zinc finger region" description="C2H2-type 5" evidence="3">
    <location>
        <begin position="167"/>
        <end position="189"/>
    </location>
</feature>
<feature type="region of interest" description="Disordered" evidence="4">
    <location>
        <begin position="1"/>
        <end position="34"/>
    </location>
</feature>
<feature type="modified residue" description="N6-acetyllysine" evidence="2">
    <location>
        <position position="18"/>
    </location>
</feature>
<feature type="modified residue" description="N6-acetyllysine" evidence="2">
    <location>
        <position position="23"/>
    </location>
</feature>
<feature type="modified residue" description="Phosphoserine" evidence="8">
    <location>
        <position position="49"/>
    </location>
</feature>
<feature type="sequence variant" id="VAR_052747" description="In dbSNP:rs3740093.">
    <original>S</original>
    <variation>G</variation>
    <location>
        <position position="65"/>
    </location>
</feature>
<feature type="sequence variant" id="VAR_035566" description="In a breast cancer sample; somatic mutation." evidence="6">
    <original>H</original>
    <variation>L</variation>
    <location>
        <position position="129"/>
    </location>
</feature>
<feature type="sequence conflict" description="In Ref. 1; AAB24264." evidence="7" ref="1">
    <original>Q</original>
    <variation>E</variation>
    <location>
        <position position="31"/>
    </location>
</feature>
<feature type="sequence conflict" description="In Ref. 1; AAB24264." evidence="7" ref="1">
    <original>GRKSVAGLR</original>
    <variation>EGSLWLVSVKYRAF</variation>
    <location>
        <begin position="216"/>
        <end position="224"/>
    </location>
</feature>
<dbReference type="EMBL" id="S50223">
    <property type="protein sequence ID" value="AAB24264.2"/>
    <property type="molecule type" value="mRNA"/>
</dbReference>
<dbReference type="EMBL" id="AY137767">
    <property type="protein sequence ID" value="AAN15804.1"/>
    <property type="molecule type" value="Genomic_DNA"/>
</dbReference>
<dbReference type="EMBL" id="BT009806">
    <property type="protein sequence ID" value="AAP88808.1"/>
    <property type="molecule type" value="mRNA"/>
</dbReference>
<dbReference type="EMBL" id="AK291508">
    <property type="protein sequence ID" value="BAF84197.1"/>
    <property type="molecule type" value="mRNA"/>
</dbReference>
<dbReference type="EMBL" id="AL353801">
    <property type="status" value="NOT_ANNOTATED_CDS"/>
    <property type="molecule type" value="Genomic_DNA"/>
</dbReference>
<dbReference type="EMBL" id="CH471160">
    <property type="protein sequence ID" value="EAW86632.1"/>
    <property type="molecule type" value="Genomic_DNA"/>
</dbReference>
<dbReference type="EMBL" id="BC010642">
    <property type="protein sequence ID" value="AAH10642.1"/>
    <property type="molecule type" value="mRNA"/>
</dbReference>
<dbReference type="EMBL" id="BC041139">
    <property type="protein sequence ID" value="AAH41139.1"/>
    <property type="molecule type" value="mRNA"/>
</dbReference>
<dbReference type="EMBL" id="BC053687">
    <property type="protein sequence ID" value="AAH53687.1"/>
    <property type="molecule type" value="mRNA"/>
</dbReference>
<dbReference type="EMBL" id="M77172">
    <property type="protein sequence ID" value="AAA36815.1"/>
    <property type="molecule type" value="Genomic_DNA"/>
</dbReference>
<dbReference type="EMBL" id="X52346">
    <property type="protein sequence ID" value="CAA36572.1"/>
    <property type="molecule type" value="mRNA"/>
</dbReference>
<dbReference type="CCDS" id="CCDS7211.1"/>
<dbReference type="PIR" id="A48927">
    <property type="entry name" value="A48927"/>
</dbReference>
<dbReference type="RefSeq" id="NP_008894.2">
    <property type="nucleotide sequence ID" value="NM_006963.4"/>
</dbReference>
<dbReference type="SMR" id="P17026"/>
<dbReference type="BioGRID" id="113401">
    <property type="interactions" value="122"/>
</dbReference>
<dbReference type="FunCoup" id="P17026">
    <property type="interactions" value="535"/>
</dbReference>
<dbReference type="IntAct" id="P17026">
    <property type="interactions" value="91"/>
</dbReference>
<dbReference type="MINT" id="P17026"/>
<dbReference type="STRING" id="9606.ENSP00000298299"/>
<dbReference type="iPTMnet" id="P17026"/>
<dbReference type="PhosphoSitePlus" id="P17026"/>
<dbReference type="BioMuta" id="ZNF22"/>
<dbReference type="DMDM" id="20455530"/>
<dbReference type="jPOST" id="P17026"/>
<dbReference type="MassIVE" id="P17026"/>
<dbReference type="PaxDb" id="9606-ENSP00000298299"/>
<dbReference type="PeptideAtlas" id="P17026"/>
<dbReference type="ProteomicsDB" id="53427"/>
<dbReference type="Pumba" id="P17026"/>
<dbReference type="Antibodypedia" id="13486">
    <property type="antibodies" value="68 antibodies from 19 providers"/>
</dbReference>
<dbReference type="DNASU" id="7570"/>
<dbReference type="Ensembl" id="ENST00000298299.4">
    <property type="protein sequence ID" value="ENSP00000298299.3"/>
    <property type="gene ID" value="ENSG00000165512.5"/>
</dbReference>
<dbReference type="GeneID" id="7570"/>
<dbReference type="KEGG" id="hsa:7570"/>
<dbReference type="MANE-Select" id="ENST00000298299.4">
    <property type="protein sequence ID" value="ENSP00000298299.3"/>
    <property type="RefSeq nucleotide sequence ID" value="NM_006963.5"/>
    <property type="RefSeq protein sequence ID" value="NP_008894.2"/>
</dbReference>
<dbReference type="UCSC" id="uc001jbw.4">
    <property type="organism name" value="human"/>
</dbReference>
<dbReference type="AGR" id="HGNC:13012"/>
<dbReference type="CTD" id="7570"/>
<dbReference type="DisGeNET" id="7570"/>
<dbReference type="GeneCards" id="ZNF22"/>
<dbReference type="HGNC" id="HGNC:13012">
    <property type="gene designation" value="ZNF22"/>
</dbReference>
<dbReference type="HPA" id="ENSG00000165512">
    <property type="expression patterns" value="Low tissue specificity"/>
</dbReference>
<dbReference type="MIM" id="194529">
    <property type="type" value="gene"/>
</dbReference>
<dbReference type="neXtProt" id="NX_P17026"/>
<dbReference type="OpenTargets" id="ENSG00000165512"/>
<dbReference type="PharmGKB" id="PA37591"/>
<dbReference type="VEuPathDB" id="HostDB:ENSG00000165512"/>
<dbReference type="eggNOG" id="KOG1721">
    <property type="taxonomic scope" value="Eukaryota"/>
</dbReference>
<dbReference type="GeneTree" id="ENSGT01130000278272"/>
<dbReference type="HOGENOM" id="CLU_002678_21_0_1"/>
<dbReference type="InParanoid" id="P17026"/>
<dbReference type="OMA" id="WGVTVRF"/>
<dbReference type="OrthoDB" id="6077919at2759"/>
<dbReference type="PAN-GO" id="P17026">
    <property type="GO annotations" value="3 GO annotations based on evolutionary models"/>
</dbReference>
<dbReference type="PhylomeDB" id="P17026"/>
<dbReference type="TreeFam" id="TF350836"/>
<dbReference type="PathwayCommons" id="P17026"/>
<dbReference type="SignaLink" id="P17026"/>
<dbReference type="BioGRID-ORCS" id="7570">
    <property type="hits" value="15 hits in 1194 CRISPR screens"/>
</dbReference>
<dbReference type="ChiTaRS" id="ZNF22">
    <property type="organism name" value="human"/>
</dbReference>
<dbReference type="GeneWiki" id="ZNF22"/>
<dbReference type="GenomeRNAi" id="7570"/>
<dbReference type="Pharos" id="P17026">
    <property type="development level" value="Tbio"/>
</dbReference>
<dbReference type="PRO" id="PR:P17026"/>
<dbReference type="Proteomes" id="UP000005640">
    <property type="component" value="Chromosome 10"/>
</dbReference>
<dbReference type="RNAct" id="P17026">
    <property type="molecule type" value="protein"/>
</dbReference>
<dbReference type="Bgee" id="ENSG00000165512">
    <property type="expression patterns" value="Expressed in ventricular zone and 208 other cell types or tissues"/>
</dbReference>
<dbReference type="ExpressionAtlas" id="P17026">
    <property type="expression patterns" value="baseline and differential"/>
</dbReference>
<dbReference type="GO" id="GO:0005654">
    <property type="term" value="C:nucleoplasm"/>
    <property type="evidence" value="ECO:0000314"/>
    <property type="project" value="HPA"/>
</dbReference>
<dbReference type="GO" id="GO:0005634">
    <property type="term" value="C:nucleus"/>
    <property type="evidence" value="ECO:0000250"/>
    <property type="project" value="UniProtKB"/>
</dbReference>
<dbReference type="GO" id="GO:0003677">
    <property type="term" value="F:DNA binding"/>
    <property type="evidence" value="ECO:0000250"/>
    <property type="project" value="UniProtKB"/>
</dbReference>
<dbReference type="GO" id="GO:0003700">
    <property type="term" value="F:DNA-binding transcription factor activity"/>
    <property type="evidence" value="ECO:0000303"/>
    <property type="project" value="ARUK-UCL"/>
</dbReference>
<dbReference type="GO" id="GO:0008270">
    <property type="term" value="F:zinc ion binding"/>
    <property type="evidence" value="ECO:0000304"/>
    <property type="project" value="ProtInc"/>
</dbReference>
<dbReference type="GO" id="GO:0042476">
    <property type="term" value="P:odontogenesis"/>
    <property type="evidence" value="ECO:0000303"/>
    <property type="project" value="UniProtKB"/>
</dbReference>
<dbReference type="GO" id="GO:0006355">
    <property type="term" value="P:regulation of DNA-templated transcription"/>
    <property type="evidence" value="ECO:0000303"/>
    <property type="project" value="UniProtKB"/>
</dbReference>
<dbReference type="GO" id="GO:0010468">
    <property type="term" value="P:regulation of gene expression"/>
    <property type="evidence" value="ECO:0000318"/>
    <property type="project" value="GO_Central"/>
</dbReference>
<dbReference type="FunFam" id="3.30.160.60:FF:000644">
    <property type="entry name" value="Zinc finger protein 22"/>
    <property type="match status" value="2"/>
</dbReference>
<dbReference type="FunFam" id="3.30.160.60:FF:000670">
    <property type="entry name" value="zinc finger protein 22"/>
    <property type="match status" value="1"/>
</dbReference>
<dbReference type="FunFam" id="3.30.160.60:FF:000817">
    <property type="entry name" value="zinc finger protein 22"/>
    <property type="match status" value="1"/>
</dbReference>
<dbReference type="FunFam" id="3.30.160.60:FF:001158">
    <property type="entry name" value="zinc finger protein 22"/>
    <property type="match status" value="1"/>
</dbReference>
<dbReference type="Gene3D" id="3.30.160.60">
    <property type="entry name" value="Classic Zinc Finger"/>
    <property type="match status" value="5"/>
</dbReference>
<dbReference type="InterPro" id="IPR036236">
    <property type="entry name" value="Znf_C2H2_sf"/>
</dbReference>
<dbReference type="InterPro" id="IPR013087">
    <property type="entry name" value="Znf_C2H2_type"/>
</dbReference>
<dbReference type="PANTHER" id="PTHR24394">
    <property type="entry name" value="ZINC FINGER PROTEIN"/>
    <property type="match status" value="1"/>
</dbReference>
<dbReference type="PANTHER" id="PTHR24394:SF48">
    <property type="entry name" value="ZINC FINGER PROTEIN 771"/>
    <property type="match status" value="1"/>
</dbReference>
<dbReference type="Pfam" id="PF00096">
    <property type="entry name" value="zf-C2H2"/>
    <property type="match status" value="5"/>
</dbReference>
<dbReference type="SMART" id="SM00355">
    <property type="entry name" value="ZnF_C2H2"/>
    <property type="match status" value="5"/>
</dbReference>
<dbReference type="SUPFAM" id="SSF57667">
    <property type="entry name" value="beta-beta-alpha zinc fingers"/>
    <property type="match status" value="3"/>
</dbReference>
<dbReference type="PROSITE" id="PS00028">
    <property type="entry name" value="ZINC_FINGER_C2H2_1"/>
    <property type="match status" value="5"/>
</dbReference>
<dbReference type="PROSITE" id="PS50157">
    <property type="entry name" value="ZINC_FINGER_C2H2_2"/>
    <property type="match status" value="5"/>
</dbReference>
<name>ZNF22_HUMAN</name>
<evidence type="ECO:0000250" key="1"/>
<evidence type="ECO:0000250" key="2">
    <source>
        <dbReference type="UniProtKB" id="Q9ERU3"/>
    </source>
</evidence>
<evidence type="ECO:0000255" key="3">
    <source>
        <dbReference type="PROSITE-ProRule" id="PRU00042"/>
    </source>
</evidence>
<evidence type="ECO:0000256" key="4">
    <source>
        <dbReference type="SAM" id="MobiDB-lite"/>
    </source>
</evidence>
<evidence type="ECO:0000269" key="5">
    <source>
    </source>
</evidence>
<evidence type="ECO:0000269" key="6">
    <source>
    </source>
</evidence>
<evidence type="ECO:0000305" key="7"/>
<evidence type="ECO:0007744" key="8">
    <source>
    </source>
</evidence>
<reference key="1">
    <citation type="journal article" date="1992" name="Blood">
        <title>Isolation of a cDNA clone encoding a zinc finger protein highly expressed in T-leukemia lines.</title>
        <authorList>
            <person name="Wu B.Y."/>
            <person name="Hanley E.W."/>
            <person name="Turka L.A."/>
            <person name="Nabel G.J."/>
        </authorList>
    </citation>
    <scope>NUCLEOTIDE SEQUENCE [MRNA]</scope>
</reference>
<reference key="2">
    <citation type="journal article" date="2003" name="J. Dent. Res.">
        <title>The human KROX-26/ZNF22 gene is expressed at sites of tooth formation and maps to the locus for permanent tooth agenesis (He-Zhao deficiency).</title>
        <authorList>
            <person name="Gao Y."/>
            <person name="Kobayashi H."/>
            <person name="Ganss B."/>
        </authorList>
    </citation>
    <scope>NUCLEOTIDE SEQUENCE [MRNA]</scope>
    <scope>TISSUE SPECIFICITY</scope>
</reference>
<reference key="3">
    <citation type="submission" date="2003-08" db="EMBL/GenBank/DDBJ databases">
        <title>Cloning of human full-length CDSs in BD Creator(TM) system donor vector.</title>
        <authorList>
            <person name="Kalnine N."/>
            <person name="Chen X."/>
            <person name="Rolfs A."/>
            <person name="Halleck A."/>
            <person name="Hines L."/>
            <person name="Eisenstein S."/>
            <person name="Koundinya M."/>
            <person name="Raphael J."/>
            <person name="Moreira D."/>
            <person name="Kelley T."/>
            <person name="LaBaer J."/>
            <person name="Lin Y."/>
            <person name="Phelan M."/>
            <person name="Farmer A."/>
        </authorList>
    </citation>
    <scope>NUCLEOTIDE SEQUENCE [LARGE SCALE MRNA]</scope>
</reference>
<reference key="4">
    <citation type="journal article" date="2004" name="Nat. Genet.">
        <title>Complete sequencing and characterization of 21,243 full-length human cDNAs.</title>
        <authorList>
            <person name="Ota T."/>
            <person name="Suzuki Y."/>
            <person name="Nishikawa T."/>
            <person name="Otsuki T."/>
            <person name="Sugiyama T."/>
            <person name="Irie R."/>
            <person name="Wakamatsu A."/>
            <person name="Hayashi K."/>
            <person name="Sato H."/>
            <person name="Nagai K."/>
            <person name="Kimura K."/>
            <person name="Makita H."/>
            <person name="Sekine M."/>
            <person name="Obayashi M."/>
            <person name="Nishi T."/>
            <person name="Shibahara T."/>
            <person name="Tanaka T."/>
            <person name="Ishii S."/>
            <person name="Yamamoto J."/>
            <person name="Saito K."/>
            <person name="Kawai Y."/>
            <person name="Isono Y."/>
            <person name="Nakamura Y."/>
            <person name="Nagahari K."/>
            <person name="Murakami K."/>
            <person name="Yasuda T."/>
            <person name="Iwayanagi T."/>
            <person name="Wagatsuma M."/>
            <person name="Shiratori A."/>
            <person name="Sudo H."/>
            <person name="Hosoiri T."/>
            <person name="Kaku Y."/>
            <person name="Kodaira H."/>
            <person name="Kondo H."/>
            <person name="Sugawara M."/>
            <person name="Takahashi M."/>
            <person name="Kanda K."/>
            <person name="Yokoi T."/>
            <person name="Furuya T."/>
            <person name="Kikkawa E."/>
            <person name="Omura Y."/>
            <person name="Abe K."/>
            <person name="Kamihara K."/>
            <person name="Katsuta N."/>
            <person name="Sato K."/>
            <person name="Tanikawa M."/>
            <person name="Yamazaki M."/>
            <person name="Ninomiya K."/>
            <person name="Ishibashi T."/>
            <person name="Yamashita H."/>
            <person name="Murakawa K."/>
            <person name="Fujimori K."/>
            <person name="Tanai H."/>
            <person name="Kimata M."/>
            <person name="Watanabe M."/>
            <person name="Hiraoka S."/>
            <person name="Chiba Y."/>
            <person name="Ishida S."/>
            <person name="Ono Y."/>
            <person name="Takiguchi S."/>
            <person name="Watanabe S."/>
            <person name="Yosida M."/>
            <person name="Hotuta T."/>
            <person name="Kusano J."/>
            <person name="Kanehori K."/>
            <person name="Takahashi-Fujii A."/>
            <person name="Hara H."/>
            <person name="Tanase T.-O."/>
            <person name="Nomura Y."/>
            <person name="Togiya S."/>
            <person name="Komai F."/>
            <person name="Hara R."/>
            <person name="Takeuchi K."/>
            <person name="Arita M."/>
            <person name="Imose N."/>
            <person name="Musashino K."/>
            <person name="Yuuki H."/>
            <person name="Oshima A."/>
            <person name="Sasaki N."/>
            <person name="Aotsuka S."/>
            <person name="Yoshikawa Y."/>
            <person name="Matsunawa H."/>
            <person name="Ichihara T."/>
            <person name="Shiohata N."/>
            <person name="Sano S."/>
            <person name="Moriya S."/>
            <person name="Momiyama H."/>
            <person name="Satoh N."/>
            <person name="Takami S."/>
            <person name="Terashima Y."/>
            <person name="Suzuki O."/>
            <person name="Nakagawa S."/>
            <person name="Senoh A."/>
            <person name="Mizoguchi H."/>
            <person name="Goto Y."/>
            <person name="Shimizu F."/>
            <person name="Wakebe H."/>
            <person name="Hishigaki H."/>
            <person name="Watanabe T."/>
            <person name="Sugiyama A."/>
            <person name="Takemoto M."/>
            <person name="Kawakami B."/>
            <person name="Yamazaki M."/>
            <person name="Watanabe K."/>
            <person name="Kumagai A."/>
            <person name="Itakura S."/>
            <person name="Fukuzumi Y."/>
            <person name="Fujimori Y."/>
            <person name="Komiyama M."/>
            <person name="Tashiro H."/>
            <person name="Tanigami A."/>
            <person name="Fujiwara T."/>
            <person name="Ono T."/>
            <person name="Yamada K."/>
            <person name="Fujii Y."/>
            <person name="Ozaki K."/>
            <person name="Hirao M."/>
            <person name="Ohmori Y."/>
            <person name="Kawabata A."/>
            <person name="Hikiji T."/>
            <person name="Kobatake N."/>
            <person name="Inagaki H."/>
            <person name="Ikema Y."/>
            <person name="Okamoto S."/>
            <person name="Okitani R."/>
            <person name="Kawakami T."/>
            <person name="Noguchi S."/>
            <person name="Itoh T."/>
            <person name="Shigeta K."/>
            <person name="Senba T."/>
            <person name="Matsumura K."/>
            <person name="Nakajima Y."/>
            <person name="Mizuno T."/>
            <person name="Morinaga M."/>
            <person name="Sasaki M."/>
            <person name="Togashi T."/>
            <person name="Oyama M."/>
            <person name="Hata H."/>
            <person name="Watanabe M."/>
            <person name="Komatsu T."/>
            <person name="Mizushima-Sugano J."/>
            <person name="Satoh T."/>
            <person name="Shirai Y."/>
            <person name="Takahashi Y."/>
            <person name="Nakagawa K."/>
            <person name="Okumura K."/>
            <person name="Nagase T."/>
            <person name="Nomura N."/>
            <person name="Kikuchi H."/>
            <person name="Masuho Y."/>
            <person name="Yamashita R."/>
            <person name="Nakai K."/>
            <person name="Yada T."/>
            <person name="Nakamura Y."/>
            <person name="Ohara O."/>
            <person name="Isogai T."/>
            <person name="Sugano S."/>
        </authorList>
    </citation>
    <scope>NUCLEOTIDE SEQUENCE [LARGE SCALE MRNA]</scope>
</reference>
<reference key="5">
    <citation type="journal article" date="2004" name="Nature">
        <title>The DNA sequence and comparative analysis of human chromosome 10.</title>
        <authorList>
            <person name="Deloukas P."/>
            <person name="Earthrowl M.E."/>
            <person name="Grafham D.V."/>
            <person name="Rubenfield M."/>
            <person name="French L."/>
            <person name="Steward C.A."/>
            <person name="Sims S.K."/>
            <person name="Jones M.C."/>
            <person name="Searle S."/>
            <person name="Scott C."/>
            <person name="Howe K."/>
            <person name="Hunt S.E."/>
            <person name="Andrews T.D."/>
            <person name="Gilbert J.G.R."/>
            <person name="Swarbreck D."/>
            <person name="Ashurst J.L."/>
            <person name="Taylor A."/>
            <person name="Battles J."/>
            <person name="Bird C.P."/>
            <person name="Ainscough R."/>
            <person name="Almeida J.P."/>
            <person name="Ashwell R.I.S."/>
            <person name="Ambrose K.D."/>
            <person name="Babbage A.K."/>
            <person name="Bagguley C.L."/>
            <person name="Bailey J."/>
            <person name="Banerjee R."/>
            <person name="Bates K."/>
            <person name="Beasley H."/>
            <person name="Bray-Allen S."/>
            <person name="Brown A.J."/>
            <person name="Brown J.Y."/>
            <person name="Burford D.C."/>
            <person name="Burrill W."/>
            <person name="Burton J."/>
            <person name="Cahill P."/>
            <person name="Camire D."/>
            <person name="Carter N.P."/>
            <person name="Chapman J.C."/>
            <person name="Clark S.Y."/>
            <person name="Clarke G."/>
            <person name="Clee C.M."/>
            <person name="Clegg S."/>
            <person name="Corby N."/>
            <person name="Coulson A."/>
            <person name="Dhami P."/>
            <person name="Dutta I."/>
            <person name="Dunn M."/>
            <person name="Faulkner L."/>
            <person name="Frankish A."/>
            <person name="Frankland J.A."/>
            <person name="Garner P."/>
            <person name="Garnett J."/>
            <person name="Gribble S."/>
            <person name="Griffiths C."/>
            <person name="Grocock R."/>
            <person name="Gustafson E."/>
            <person name="Hammond S."/>
            <person name="Harley J.L."/>
            <person name="Hart E."/>
            <person name="Heath P.D."/>
            <person name="Ho T.P."/>
            <person name="Hopkins B."/>
            <person name="Horne J."/>
            <person name="Howden P.J."/>
            <person name="Huckle E."/>
            <person name="Hynds C."/>
            <person name="Johnson C."/>
            <person name="Johnson D."/>
            <person name="Kana A."/>
            <person name="Kay M."/>
            <person name="Kimberley A.M."/>
            <person name="Kershaw J.K."/>
            <person name="Kokkinaki M."/>
            <person name="Laird G.K."/>
            <person name="Lawlor S."/>
            <person name="Lee H.M."/>
            <person name="Leongamornlert D.A."/>
            <person name="Laird G."/>
            <person name="Lloyd C."/>
            <person name="Lloyd D.M."/>
            <person name="Loveland J."/>
            <person name="Lovell J."/>
            <person name="McLaren S."/>
            <person name="McLay K.E."/>
            <person name="McMurray A."/>
            <person name="Mashreghi-Mohammadi M."/>
            <person name="Matthews L."/>
            <person name="Milne S."/>
            <person name="Nickerson T."/>
            <person name="Nguyen M."/>
            <person name="Overton-Larty E."/>
            <person name="Palmer S.A."/>
            <person name="Pearce A.V."/>
            <person name="Peck A.I."/>
            <person name="Pelan S."/>
            <person name="Phillimore B."/>
            <person name="Porter K."/>
            <person name="Rice C.M."/>
            <person name="Rogosin A."/>
            <person name="Ross M.T."/>
            <person name="Sarafidou T."/>
            <person name="Sehra H.K."/>
            <person name="Shownkeen R."/>
            <person name="Skuce C.D."/>
            <person name="Smith M."/>
            <person name="Standring L."/>
            <person name="Sycamore N."/>
            <person name="Tester J."/>
            <person name="Thorpe A."/>
            <person name="Torcasso W."/>
            <person name="Tracey A."/>
            <person name="Tromans A."/>
            <person name="Tsolas J."/>
            <person name="Wall M."/>
            <person name="Walsh J."/>
            <person name="Wang H."/>
            <person name="Weinstock K."/>
            <person name="West A.P."/>
            <person name="Willey D.L."/>
            <person name="Whitehead S.L."/>
            <person name="Wilming L."/>
            <person name="Wray P.W."/>
            <person name="Young L."/>
            <person name="Chen Y."/>
            <person name="Lovering R.C."/>
            <person name="Moschonas N.K."/>
            <person name="Siebert R."/>
            <person name="Fechtel K."/>
            <person name="Bentley D."/>
            <person name="Durbin R.M."/>
            <person name="Hubbard T."/>
            <person name="Doucette-Stamm L."/>
            <person name="Beck S."/>
            <person name="Smith D.R."/>
            <person name="Rogers J."/>
        </authorList>
    </citation>
    <scope>NUCLEOTIDE SEQUENCE [LARGE SCALE GENOMIC DNA]</scope>
</reference>
<reference key="6">
    <citation type="submission" date="2005-07" db="EMBL/GenBank/DDBJ databases">
        <authorList>
            <person name="Mural R.J."/>
            <person name="Istrail S."/>
            <person name="Sutton G."/>
            <person name="Florea L."/>
            <person name="Halpern A.L."/>
            <person name="Mobarry C.M."/>
            <person name="Lippert R."/>
            <person name="Walenz B."/>
            <person name="Shatkay H."/>
            <person name="Dew I."/>
            <person name="Miller J.R."/>
            <person name="Flanigan M.J."/>
            <person name="Edwards N.J."/>
            <person name="Bolanos R."/>
            <person name="Fasulo D."/>
            <person name="Halldorsson B.V."/>
            <person name="Hannenhalli S."/>
            <person name="Turner R."/>
            <person name="Yooseph S."/>
            <person name="Lu F."/>
            <person name="Nusskern D.R."/>
            <person name="Shue B.C."/>
            <person name="Zheng X.H."/>
            <person name="Zhong F."/>
            <person name="Delcher A.L."/>
            <person name="Huson D.H."/>
            <person name="Kravitz S.A."/>
            <person name="Mouchard L."/>
            <person name="Reinert K."/>
            <person name="Remington K.A."/>
            <person name="Clark A.G."/>
            <person name="Waterman M.S."/>
            <person name="Eichler E.E."/>
            <person name="Adams M.D."/>
            <person name="Hunkapiller M.W."/>
            <person name="Myers E.W."/>
            <person name="Venter J.C."/>
        </authorList>
    </citation>
    <scope>NUCLEOTIDE SEQUENCE [LARGE SCALE GENOMIC DNA]</scope>
</reference>
<reference key="7">
    <citation type="journal article" date="2004" name="Genome Res.">
        <title>The status, quality, and expansion of the NIH full-length cDNA project: the Mammalian Gene Collection (MGC).</title>
        <authorList>
            <consortium name="The MGC Project Team"/>
        </authorList>
    </citation>
    <scope>NUCLEOTIDE SEQUENCE [LARGE SCALE MRNA]</scope>
    <source>
        <tissue>Blood</tissue>
        <tissue>Brain</tissue>
        <tissue>Colon</tissue>
    </source>
</reference>
<reference key="8">
    <citation type="journal article" date="1991" name="Proc. Natl. Acad. Sci. U.S.A.">
        <title>Characterization and mapping of human genes encoding zinc finger proteins.</title>
        <authorList>
            <person name="Bray P.L."/>
            <person name="Lichter P."/>
            <person name="Thiesen H.-J."/>
            <person name="Ward D.C."/>
            <person name="Dawid I.B."/>
        </authorList>
    </citation>
    <scope>NUCLEOTIDE SEQUENCE [GENOMIC DNA] OF 132-224</scope>
    <source>
        <tissue>Placenta</tissue>
    </source>
</reference>
<reference key="9">
    <citation type="journal article" date="1990" name="New Biol.">
        <title>Multiple genes encoding zinc finger domains are expressed in human T cells.</title>
        <authorList>
            <person name="Thiesen H.-J."/>
        </authorList>
    </citation>
    <scope>NUCLEOTIDE SEQUENCE [MRNA] OF 139-194</scope>
    <source>
        <tissue>Lymphoid tissue</tissue>
    </source>
</reference>
<reference key="10">
    <citation type="journal article" date="2014" name="J. Proteomics">
        <title>An enzyme assisted RP-RPLC approach for in-depth analysis of human liver phosphoproteome.</title>
        <authorList>
            <person name="Bian Y."/>
            <person name="Song C."/>
            <person name="Cheng K."/>
            <person name="Dong M."/>
            <person name="Wang F."/>
            <person name="Huang J."/>
            <person name="Sun D."/>
            <person name="Wang L."/>
            <person name="Ye M."/>
            <person name="Zou H."/>
        </authorList>
    </citation>
    <scope>PHOSPHORYLATION [LARGE SCALE ANALYSIS] AT SER-49</scope>
    <scope>IDENTIFICATION BY MASS SPECTROMETRY [LARGE SCALE ANALYSIS]</scope>
    <source>
        <tissue>Liver</tissue>
    </source>
</reference>
<reference key="11">
    <citation type="journal article" date="2006" name="Science">
        <title>The consensus coding sequences of human breast and colorectal cancers.</title>
        <authorList>
            <person name="Sjoeblom T."/>
            <person name="Jones S."/>
            <person name="Wood L.D."/>
            <person name="Parsons D.W."/>
            <person name="Lin J."/>
            <person name="Barber T.D."/>
            <person name="Mandelker D."/>
            <person name="Leary R.J."/>
            <person name="Ptak J."/>
            <person name="Silliman N."/>
            <person name="Szabo S."/>
            <person name="Buckhaults P."/>
            <person name="Farrell C."/>
            <person name="Meeh P."/>
            <person name="Markowitz S.D."/>
            <person name="Willis J."/>
            <person name="Dawson D."/>
            <person name="Willson J.K.V."/>
            <person name="Gazdar A.F."/>
            <person name="Hartigan J."/>
            <person name="Wu L."/>
            <person name="Liu C."/>
            <person name="Parmigiani G."/>
            <person name="Park B.H."/>
            <person name="Bachman K.E."/>
            <person name="Papadopoulos N."/>
            <person name="Vogelstein B."/>
            <person name="Kinzler K.W."/>
            <person name="Velculescu V.E."/>
        </authorList>
    </citation>
    <scope>VARIANT [LARGE SCALE ANALYSIS] LEU-129</scope>
</reference>
<protein>
    <recommendedName>
        <fullName>Zinc finger protein 22</fullName>
    </recommendedName>
    <alternativeName>
        <fullName>Zinc finger protein KOX15</fullName>
    </alternativeName>
    <alternativeName>
        <fullName>Zinc finger protein Krox-26</fullName>
    </alternativeName>
</protein>
<keyword id="KW-0007">Acetylation</keyword>
<keyword id="KW-0238">DNA-binding</keyword>
<keyword id="KW-0479">Metal-binding</keyword>
<keyword id="KW-0539">Nucleus</keyword>
<keyword id="KW-0597">Phosphoprotein</keyword>
<keyword id="KW-1267">Proteomics identification</keyword>
<keyword id="KW-1185">Reference proteome</keyword>
<keyword id="KW-0677">Repeat</keyword>
<keyword id="KW-0804">Transcription</keyword>
<keyword id="KW-0805">Transcription regulation</keyword>
<keyword id="KW-0862">Zinc</keyword>
<keyword id="KW-0863">Zinc-finger</keyword>
<organism>
    <name type="scientific">Homo sapiens</name>
    <name type="common">Human</name>
    <dbReference type="NCBI Taxonomy" id="9606"/>
    <lineage>
        <taxon>Eukaryota</taxon>
        <taxon>Metazoa</taxon>
        <taxon>Chordata</taxon>
        <taxon>Craniata</taxon>
        <taxon>Vertebrata</taxon>
        <taxon>Euteleostomi</taxon>
        <taxon>Mammalia</taxon>
        <taxon>Eutheria</taxon>
        <taxon>Euarchontoglires</taxon>
        <taxon>Primates</taxon>
        <taxon>Haplorrhini</taxon>
        <taxon>Catarrhini</taxon>
        <taxon>Hominidae</taxon>
        <taxon>Homo</taxon>
    </lineage>
</organism>
<sequence length="224" mass="25915">MRLAKPKAGISRSSSQGKAYENKRKTGRQRQKWGMTIRFDSSFSRLRRSLDDKPYKCTECEKSFSQSSTLFQHQKIHTGKKSHKCADCGKSFFQSSNLIQHRRIHTGEKPYKCDECGESFKQSSNLIQHQRIHTGEKPYQCDECGRCFSQSSHLIQHQRTHTGEKPYQCSECGKCFSQSSHLRQHMKVHKEEKPRKTRGKNIRVKTHLPSWKAGTGRKSVAGLR</sequence>
<comment type="function">
    <text evidence="1">Binds DNA through the consensus sequence 5'-CAATG-3'. May be involved in transcriptional regulation and may play a role in tooth formation (By similarity).</text>
</comment>
<comment type="interaction">
    <interactant intactId="EBI-20803387">
        <id>P17026</id>
    </interactant>
    <interactant intactId="EBI-349854">
        <id>P13569</id>
        <label>CFTR</label>
    </interactant>
    <organismsDiffer>false</organismsDiffer>
    <experiments>2</experiments>
</comment>
<comment type="subcellular location">
    <subcellularLocation>
        <location evidence="1">Nucleus</location>
    </subcellularLocation>
</comment>
<comment type="tissue specificity">
    <text evidence="5">In the embryo, expressed in developing craniofacial structures including dental epithelium of maxillary molar tooth organs, tongue epithelium and muscle, and craniofacial bone osteoblasts. In the adult, expressed in mesoderm-derived tissues such as skeletal muscle, heart, kidney and liver. Intermediate expression in spleen, thymus and brain. Low levels in endoderm-derived tissues such as intestine and colon.</text>
</comment>
<comment type="similarity">
    <text evidence="7">Belongs to the krueppel C2H2-type zinc-finger protein family.</text>
</comment>